<keyword id="KW-0328">Glycosyltransferase</keyword>
<keyword id="KW-1185">Reference proteome</keyword>
<keyword id="KW-0808">Transferase</keyword>
<sequence>MDTNSIPKYSIRGHNIWGFKDMAHFLDYLYQGAQIKSGSLIAINAEKILTAETDKGLNQLLDEADYLYADGISVVRGIRRKYPDAQVSRIAGADLWEALMERAGKEGTPVFLVGGKPQVLAQTESKLKAQWNVNIVGSQDGYFTPQDRDALFERIKASGAKIVTIAMGSPKQELFIRACRQVHPDALYMGVGGTYDVFTGHVKRAPKAWQNLGLEWLYRLLSQPSRIKRQFKLLKFVGYYYSNKL</sequence>
<gene>
    <name evidence="1" type="primary">wecG</name>
    <name evidence="1" type="synonym">rffM</name>
    <name type="ordered locus">PMI3327</name>
</gene>
<dbReference type="EC" id="2.4.1.180" evidence="1"/>
<dbReference type="EMBL" id="AM942759">
    <property type="protein sequence ID" value="CAR46526.1"/>
    <property type="molecule type" value="Genomic_DNA"/>
</dbReference>
<dbReference type="RefSeq" id="WP_004246339.1">
    <property type="nucleotide sequence ID" value="NC_010554.1"/>
</dbReference>
<dbReference type="SMR" id="B4F1W8"/>
<dbReference type="CAZy" id="GT26">
    <property type="family name" value="Glycosyltransferase Family 26"/>
</dbReference>
<dbReference type="EnsemblBacteria" id="CAR46526">
    <property type="protein sequence ID" value="CAR46526"/>
    <property type="gene ID" value="PMI3327"/>
</dbReference>
<dbReference type="GeneID" id="6801694"/>
<dbReference type="KEGG" id="pmr:PMI3327"/>
<dbReference type="eggNOG" id="COG1922">
    <property type="taxonomic scope" value="Bacteria"/>
</dbReference>
<dbReference type="HOGENOM" id="CLU_063203_3_2_6"/>
<dbReference type="UniPathway" id="UPA00566"/>
<dbReference type="Proteomes" id="UP000008319">
    <property type="component" value="Chromosome"/>
</dbReference>
<dbReference type="GO" id="GO:0047241">
    <property type="term" value="F:lipopolysaccharide N-acetylmannosaminouronosyltransferase activity"/>
    <property type="evidence" value="ECO:0007669"/>
    <property type="project" value="UniProtKB-UniRule"/>
</dbReference>
<dbReference type="GO" id="GO:0009246">
    <property type="term" value="P:enterobacterial common antigen biosynthetic process"/>
    <property type="evidence" value="ECO:0007669"/>
    <property type="project" value="UniProtKB-UniRule"/>
</dbReference>
<dbReference type="CDD" id="cd06533">
    <property type="entry name" value="Glyco_transf_WecG_TagA"/>
    <property type="match status" value="1"/>
</dbReference>
<dbReference type="HAMAP" id="MF_01001">
    <property type="entry name" value="WecG_RffM"/>
    <property type="match status" value="1"/>
</dbReference>
<dbReference type="InterPro" id="IPR028082">
    <property type="entry name" value="Peripla_BP_I"/>
</dbReference>
<dbReference type="InterPro" id="IPR023085">
    <property type="entry name" value="UDP-ManNAcA_Trfase_WecG"/>
</dbReference>
<dbReference type="InterPro" id="IPR004629">
    <property type="entry name" value="WecG_TagA_CpsF"/>
</dbReference>
<dbReference type="NCBIfam" id="NF002980">
    <property type="entry name" value="PRK03692.1"/>
    <property type="match status" value="1"/>
</dbReference>
<dbReference type="NCBIfam" id="TIGR00696">
    <property type="entry name" value="wecG_tagA_cpsF"/>
    <property type="match status" value="1"/>
</dbReference>
<dbReference type="PANTHER" id="PTHR34136">
    <property type="match status" value="1"/>
</dbReference>
<dbReference type="PANTHER" id="PTHR34136:SF1">
    <property type="entry name" value="UDP-N-ACETYL-D-MANNOSAMINURONIC ACID TRANSFERASE"/>
    <property type="match status" value="1"/>
</dbReference>
<dbReference type="Pfam" id="PF03808">
    <property type="entry name" value="Glyco_tran_WecG"/>
    <property type="match status" value="1"/>
</dbReference>
<dbReference type="SUPFAM" id="SSF53822">
    <property type="entry name" value="Periplasmic binding protein-like I"/>
    <property type="match status" value="1"/>
</dbReference>
<comment type="function">
    <text evidence="1">Catalyzes the synthesis of Und-PP-GlcNAc-ManNAcA (Lipid II), the second lipid-linked intermediate involved in enterobacterial common antigen (ECA) synthesis.</text>
</comment>
<comment type="catalytic activity">
    <reaction evidence="1">
        <text>UDP-N-acetyl-alpha-D-mannosaminouronate + N-acetyl-alpha-D-glucosaminyl-di-trans,octa-cis-undecaprenyl diphosphate = beta-D-ManNAcA-(1-&gt;4)-alpha-D-GlcNAc-di-trans,octa-cis-undecaprenyl diphosphate + UDP + H(+)</text>
        <dbReference type="Rhea" id="RHEA:28366"/>
        <dbReference type="ChEBI" id="CHEBI:15378"/>
        <dbReference type="ChEBI" id="CHEBI:58223"/>
        <dbReference type="ChEBI" id="CHEBI:61495"/>
        <dbReference type="ChEBI" id="CHEBI:62959"/>
        <dbReference type="ChEBI" id="CHEBI:70731"/>
        <dbReference type="EC" id="2.4.1.180"/>
    </reaction>
</comment>
<comment type="pathway">
    <text evidence="1">Bacterial outer membrane biogenesis; enterobacterial common antigen biosynthesis.</text>
</comment>
<comment type="similarity">
    <text evidence="1">Belongs to the glycosyltransferase 26 family.</text>
</comment>
<protein>
    <recommendedName>
        <fullName evidence="1">UDP-N-acetyl-D-mannosaminuronic acid transferase</fullName>
        <shortName evidence="1">UDP-ManNAcA transferase</shortName>
        <ecNumber evidence="1">2.4.1.180</ecNumber>
    </recommendedName>
</protein>
<evidence type="ECO:0000255" key="1">
    <source>
        <dbReference type="HAMAP-Rule" id="MF_01001"/>
    </source>
</evidence>
<proteinExistence type="inferred from homology"/>
<feature type="chain" id="PRO_1000134581" description="UDP-N-acetyl-D-mannosaminuronic acid transferase">
    <location>
        <begin position="1"/>
        <end position="245"/>
    </location>
</feature>
<reference key="1">
    <citation type="journal article" date="2008" name="J. Bacteriol.">
        <title>Complete genome sequence of uropathogenic Proteus mirabilis, a master of both adherence and motility.</title>
        <authorList>
            <person name="Pearson M.M."/>
            <person name="Sebaihia M."/>
            <person name="Churcher C."/>
            <person name="Quail M.A."/>
            <person name="Seshasayee A.S."/>
            <person name="Luscombe N.M."/>
            <person name="Abdellah Z."/>
            <person name="Arrosmith C."/>
            <person name="Atkin B."/>
            <person name="Chillingworth T."/>
            <person name="Hauser H."/>
            <person name="Jagels K."/>
            <person name="Moule S."/>
            <person name="Mungall K."/>
            <person name="Norbertczak H."/>
            <person name="Rabbinowitsch E."/>
            <person name="Walker D."/>
            <person name="Whithead S."/>
            <person name="Thomson N.R."/>
            <person name="Rather P.N."/>
            <person name="Parkhill J."/>
            <person name="Mobley H.L.T."/>
        </authorList>
    </citation>
    <scope>NUCLEOTIDE SEQUENCE [LARGE SCALE GENOMIC DNA]</scope>
    <source>
        <strain>HI4320</strain>
    </source>
</reference>
<organism>
    <name type="scientific">Proteus mirabilis (strain HI4320)</name>
    <dbReference type="NCBI Taxonomy" id="529507"/>
    <lineage>
        <taxon>Bacteria</taxon>
        <taxon>Pseudomonadati</taxon>
        <taxon>Pseudomonadota</taxon>
        <taxon>Gammaproteobacteria</taxon>
        <taxon>Enterobacterales</taxon>
        <taxon>Morganellaceae</taxon>
        <taxon>Proteus</taxon>
    </lineage>
</organism>
<accession>B4F1W8</accession>
<name>WECG_PROMH</name>